<gene>
    <name evidence="1" type="primary">efp</name>
    <name type="ordered locus">PFLU_1714</name>
</gene>
<proteinExistence type="inferred from homology"/>
<accession>C3K6L0</accession>
<protein>
    <recommendedName>
        <fullName evidence="1">Elongation factor P</fullName>
        <shortName evidence="1">EF-P</shortName>
    </recommendedName>
</protein>
<keyword id="KW-0963">Cytoplasm</keyword>
<keyword id="KW-0251">Elongation factor</keyword>
<keyword id="KW-0648">Protein biosynthesis</keyword>
<feature type="chain" id="PRO_1000203276" description="Elongation factor P">
    <location>
        <begin position="1"/>
        <end position="190"/>
    </location>
</feature>
<dbReference type="EMBL" id="AM181176">
    <property type="protein sequence ID" value="CAY47962.1"/>
    <property type="molecule type" value="Genomic_DNA"/>
</dbReference>
<dbReference type="RefSeq" id="WP_003172723.1">
    <property type="nucleotide sequence ID" value="NC_012660.1"/>
</dbReference>
<dbReference type="SMR" id="C3K6L0"/>
<dbReference type="STRING" id="294.SRM1_03897"/>
<dbReference type="eggNOG" id="COG0231">
    <property type="taxonomic scope" value="Bacteria"/>
</dbReference>
<dbReference type="HOGENOM" id="CLU_074944_2_1_6"/>
<dbReference type="OrthoDB" id="9801844at2"/>
<dbReference type="UniPathway" id="UPA00345"/>
<dbReference type="GO" id="GO:0005737">
    <property type="term" value="C:cytoplasm"/>
    <property type="evidence" value="ECO:0007669"/>
    <property type="project" value="UniProtKB-SubCell"/>
</dbReference>
<dbReference type="GO" id="GO:0003746">
    <property type="term" value="F:translation elongation factor activity"/>
    <property type="evidence" value="ECO:0007669"/>
    <property type="project" value="UniProtKB-UniRule"/>
</dbReference>
<dbReference type="GO" id="GO:0043043">
    <property type="term" value="P:peptide biosynthetic process"/>
    <property type="evidence" value="ECO:0007669"/>
    <property type="project" value="InterPro"/>
</dbReference>
<dbReference type="CDD" id="cd04470">
    <property type="entry name" value="S1_EF-P_repeat_1"/>
    <property type="match status" value="1"/>
</dbReference>
<dbReference type="FunFam" id="2.30.30.30:FF:000003">
    <property type="entry name" value="Elongation factor P"/>
    <property type="match status" value="1"/>
</dbReference>
<dbReference type="FunFam" id="2.40.50.140:FF:000004">
    <property type="entry name" value="Elongation factor P"/>
    <property type="match status" value="1"/>
</dbReference>
<dbReference type="Gene3D" id="2.30.30.30">
    <property type="match status" value="1"/>
</dbReference>
<dbReference type="Gene3D" id="2.40.50.140">
    <property type="entry name" value="Nucleic acid-binding proteins"/>
    <property type="match status" value="2"/>
</dbReference>
<dbReference type="HAMAP" id="MF_00141">
    <property type="entry name" value="EF_P"/>
    <property type="match status" value="1"/>
</dbReference>
<dbReference type="InterPro" id="IPR015365">
    <property type="entry name" value="Elong-fact-P_C"/>
</dbReference>
<dbReference type="InterPro" id="IPR012340">
    <property type="entry name" value="NA-bd_OB-fold"/>
</dbReference>
<dbReference type="InterPro" id="IPR014722">
    <property type="entry name" value="Rib_uL2_dom2"/>
</dbReference>
<dbReference type="InterPro" id="IPR020599">
    <property type="entry name" value="Transl_elong_fac_P/YeiP"/>
</dbReference>
<dbReference type="InterPro" id="IPR013185">
    <property type="entry name" value="Transl_elong_KOW-like"/>
</dbReference>
<dbReference type="InterPro" id="IPR001059">
    <property type="entry name" value="Transl_elong_P/YeiP_cen"/>
</dbReference>
<dbReference type="InterPro" id="IPR011768">
    <property type="entry name" value="Transl_elongation_fac_P"/>
</dbReference>
<dbReference type="InterPro" id="IPR008991">
    <property type="entry name" value="Translation_prot_SH3-like_sf"/>
</dbReference>
<dbReference type="NCBIfam" id="NF001810">
    <property type="entry name" value="PRK00529.1"/>
    <property type="match status" value="1"/>
</dbReference>
<dbReference type="PANTHER" id="PTHR30053">
    <property type="entry name" value="ELONGATION FACTOR P"/>
    <property type="match status" value="1"/>
</dbReference>
<dbReference type="PANTHER" id="PTHR30053:SF12">
    <property type="entry name" value="ELONGATION FACTOR P (EF-P) FAMILY PROTEIN"/>
    <property type="match status" value="1"/>
</dbReference>
<dbReference type="Pfam" id="PF01132">
    <property type="entry name" value="EFP"/>
    <property type="match status" value="1"/>
</dbReference>
<dbReference type="Pfam" id="PF08207">
    <property type="entry name" value="EFP_N"/>
    <property type="match status" value="1"/>
</dbReference>
<dbReference type="Pfam" id="PF09285">
    <property type="entry name" value="Elong-fact-P_C"/>
    <property type="match status" value="1"/>
</dbReference>
<dbReference type="PIRSF" id="PIRSF005901">
    <property type="entry name" value="EF-P"/>
    <property type="match status" value="1"/>
</dbReference>
<dbReference type="SMART" id="SM01185">
    <property type="entry name" value="EFP"/>
    <property type="match status" value="1"/>
</dbReference>
<dbReference type="SMART" id="SM00841">
    <property type="entry name" value="Elong-fact-P_C"/>
    <property type="match status" value="1"/>
</dbReference>
<dbReference type="SUPFAM" id="SSF50249">
    <property type="entry name" value="Nucleic acid-binding proteins"/>
    <property type="match status" value="2"/>
</dbReference>
<dbReference type="SUPFAM" id="SSF50104">
    <property type="entry name" value="Translation proteins SH3-like domain"/>
    <property type="match status" value="1"/>
</dbReference>
<name>EFP_PSEFS</name>
<organism>
    <name type="scientific">Pseudomonas fluorescens (strain SBW25)</name>
    <dbReference type="NCBI Taxonomy" id="216595"/>
    <lineage>
        <taxon>Bacteria</taxon>
        <taxon>Pseudomonadati</taxon>
        <taxon>Pseudomonadota</taxon>
        <taxon>Gammaproteobacteria</taxon>
        <taxon>Pseudomonadales</taxon>
        <taxon>Pseudomonadaceae</taxon>
        <taxon>Pseudomonas</taxon>
    </lineage>
</organism>
<sequence length="190" mass="21316">MKTGKELKPGTVIRLENDPWLVQKAEFTKSGRNSAIMKTKLKNLLTGYKTEIVYSADDKLDDVILDRKEATLSFISGDTYTFMDTTDYTMYELNAEDIEAVLPFIEEGMEDVCEAIFFEERLVSVELPTTIVRKVAYTEGSARGDTSGKVMKPAKLSNGTELQVADFIEIDDLIEIDTREGGSYKGRAKK</sequence>
<evidence type="ECO:0000255" key="1">
    <source>
        <dbReference type="HAMAP-Rule" id="MF_00141"/>
    </source>
</evidence>
<reference key="1">
    <citation type="journal article" date="2009" name="Genome Biol.">
        <title>Genomic and genetic analyses of diversity and plant interactions of Pseudomonas fluorescens.</title>
        <authorList>
            <person name="Silby M.W."/>
            <person name="Cerdeno-Tarraga A.M."/>
            <person name="Vernikos G.S."/>
            <person name="Giddens S.R."/>
            <person name="Jackson R.W."/>
            <person name="Preston G.M."/>
            <person name="Zhang X.-X."/>
            <person name="Moon C.D."/>
            <person name="Gehrig S.M."/>
            <person name="Godfrey S.A.C."/>
            <person name="Knight C.G."/>
            <person name="Malone J.G."/>
            <person name="Robinson Z."/>
            <person name="Spiers A.J."/>
            <person name="Harris S."/>
            <person name="Challis G.L."/>
            <person name="Yaxley A.M."/>
            <person name="Harris D."/>
            <person name="Seeger K."/>
            <person name="Murphy L."/>
            <person name="Rutter S."/>
            <person name="Squares R."/>
            <person name="Quail M.A."/>
            <person name="Saunders E."/>
            <person name="Mavromatis K."/>
            <person name="Brettin T.S."/>
            <person name="Bentley S.D."/>
            <person name="Hothersall J."/>
            <person name="Stephens E."/>
            <person name="Thomas C.M."/>
            <person name="Parkhill J."/>
            <person name="Levy S.B."/>
            <person name="Rainey P.B."/>
            <person name="Thomson N.R."/>
        </authorList>
    </citation>
    <scope>NUCLEOTIDE SEQUENCE [LARGE SCALE GENOMIC DNA]</scope>
    <source>
        <strain>SBW25</strain>
    </source>
</reference>
<comment type="function">
    <text evidence="1">Involved in peptide bond synthesis. Stimulates efficient translation and peptide-bond synthesis on native or reconstituted 70S ribosomes in vitro. Probably functions indirectly by altering the affinity of the ribosome for aminoacyl-tRNA, thus increasing their reactivity as acceptors for peptidyl transferase.</text>
</comment>
<comment type="pathway">
    <text evidence="1">Protein biosynthesis; polypeptide chain elongation.</text>
</comment>
<comment type="subcellular location">
    <subcellularLocation>
        <location evidence="1">Cytoplasm</location>
    </subcellularLocation>
</comment>
<comment type="similarity">
    <text evidence="1">Belongs to the elongation factor P family.</text>
</comment>